<accession>O44410</accession>
<name>RRP8_CAEEL</name>
<keyword id="KW-0156">Chromatin regulator</keyword>
<keyword id="KW-0489">Methyltransferase</keyword>
<keyword id="KW-0539">Nucleus</keyword>
<keyword id="KW-1185">Reference proteome</keyword>
<keyword id="KW-0678">Repressor</keyword>
<keyword id="KW-0698">rRNA processing</keyword>
<keyword id="KW-0949">S-adenosyl-L-methionine</keyword>
<keyword id="KW-0804">Transcription</keyword>
<keyword id="KW-0805">Transcription regulation</keyword>
<keyword id="KW-0808">Transferase</keyword>
<reference key="1">
    <citation type="journal article" date="1998" name="Science">
        <title>Genome sequence of the nematode C. elegans: a platform for investigating biology.</title>
        <authorList>
            <consortium name="The C. elegans sequencing consortium"/>
        </authorList>
    </citation>
    <scope>NUCLEOTIDE SEQUENCE [LARGE SCALE GENOMIC DNA]</scope>
    <source>
        <strain>Bristol N2</strain>
    </source>
</reference>
<reference key="2">
    <citation type="journal article" date="2018" name="Proc. Natl. Acad. Sci. U.S.A.">
        <title>Erroneous ribosomal RNAs promote the generation of antisense ribosomal siRNA.</title>
        <authorList>
            <person name="Zhu C."/>
            <person name="Yan Q."/>
            <person name="Weng C."/>
            <person name="Hou X."/>
            <person name="Mao H."/>
            <person name="Liu D."/>
            <person name="Feng X."/>
            <person name="Guang S."/>
        </authorList>
    </citation>
    <scope>FUNCTION</scope>
    <scope>SUBCELLULAR LOCATION</scope>
</reference>
<reference key="3">
    <citation type="journal article" date="2021" name="Nucleic Acids Res.">
        <title>Antisense ribosomal siRNAs inhibit RNA polymerase I-directed transcription in C. elegans.</title>
        <authorList>
            <person name="Liao S."/>
            <person name="Chen X."/>
            <person name="Xu T."/>
            <person name="Jin Q."/>
            <person name="Xu Z."/>
            <person name="Xu D."/>
            <person name="Zhou X."/>
            <person name="Zhu C."/>
            <person name="Guang S."/>
            <person name="Feng X."/>
        </authorList>
    </citation>
    <scope>FUNCTION</scope>
    <scope>SUBCELLULAR LOCATION</scope>
</reference>
<evidence type="ECO:0000250" key="1">
    <source>
        <dbReference type="UniProtKB" id="O43159"/>
    </source>
</evidence>
<evidence type="ECO:0000256" key="2">
    <source>
        <dbReference type="SAM" id="MobiDB-lite"/>
    </source>
</evidence>
<evidence type="ECO:0000269" key="3">
    <source>
    </source>
</evidence>
<evidence type="ECO:0000269" key="4">
    <source>
    </source>
</evidence>
<evidence type="ECO:0000305" key="5"/>
<sequence>MGKKRKITDEKDAQHVPAEKREKVENWLKKSTEKPTSSQSDAEKKKKRPWRNKVRKLAAKKAAADKKSENPEEPPLILEPKSSSDENTKKKRKRGPKKKKFKPEVAGKAAETENDDVAAAPEEADPIAEAKKRLDAGRFRFLNEKLYTCTGSEAFDFFKEDPTAFDLYHKGFADQVKKWPNHPLREIIRWLQSKPDQQSVFDLGCGEAKIAEAVGEKHKIRSFDLVAVNDRVESCDMSKLPAEDSSADIVIYCLSLMGTNLYDFIREARRVLKIGGILKIAEVTSRFVSIKQFCEAITKMGFEQSHRRELTDYFMMMEFKKVEKVEQKRPYGLKLKPCLYKKR</sequence>
<feature type="chain" id="PRO_0000390456" description="Ribosomal RNA-processing protein 8">
    <location>
        <begin position="1"/>
        <end position="343"/>
    </location>
</feature>
<feature type="region of interest" description="Disordered" evidence="2">
    <location>
        <begin position="1"/>
        <end position="123"/>
    </location>
</feature>
<feature type="compositionally biased region" description="Basic and acidic residues" evidence="2">
    <location>
        <begin position="7"/>
        <end position="33"/>
    </location>
</feature>
<feature type="compositionally biased region" description="Basic residues" evidence="2">
    <location>
        <begin position="45"/>
        <end position="59"/>
    </location>
</feature>
<feature type="compositionally biased region" description="Basic residues" evidence="2">
    <location>
        <begin position="89"/>
        <end position="101"/>
    </location>
</feature>
<feature type="compositionally biased region" description="Acidic residues" evidence="2">
    <location>
        <begin position="112"/>
        <end position="123"/>
    </location>
</feature>
<feature type="binding site" evidence="1">
    <location>
        <position position="169"/>
    </location>
    <ligand>
        <name>S-adenosyl-L-methionine</name>
        <dbReference type="ChEBI" id="CHEBI:59789"/>
    </ligand>
</feature>
<feature type="binding site" evidence="1">
    <location>
        <position position="204"/>
    </location>
    <ligand>
        <name>S-adenosyl-L-methionine</name>
        <dbReference type="ChEBI" id="CHEBI:59789"/>
    </ligand>
</feature>
<feature type="binding site" evidence="1">
    <location>
        <position position="224"/>
    </location>
    <ligand>
        <name>S-adenosyl-L-methionine</name>
        <dbReference type="ChEBI" id="CHEBI:59789"/>
    </ligand>
</feature>
<feature type="binding site" evidence="1">
    <location>
        <position position="236"/>
    </location>
    <ligand>
        <name>S-adenosyl-L-methionine</name>
        <dbReference type="ChEBI" id="CHEBI:59789"/>
    </ligand>
</feature>
<feature type="binding site" evidence="1">
    <location>
        <position position="237"/>
    </location>
    <ligand>
        <name>S-adenosyl-L-methionine</name>
        <dbReference type="ChEBI" id="CHEBI:59789"/>
    </ligand>
</feature>
<feature type="binding site" evidence="1">
    <location>
        <position position="253"/>
    </location>
    <ligand>
        <name>S-adenosyl-L-methionine</name>
        <dbReference type="ChEBI" id="CHEBI:59789"/>
    </ligand>
</feature>
<gene>
    <name type="primary">rrp-8</name>
    <name type="ORF">T07A9.8</name>
</gene>
<organism>
    <name type="scientific">Caenorhabditis elegans</name>
    <dbReference type="NCBI Taxonomy" id="6239"/>
    <lineage>
        <taxon>Eukaryota</taxon>
        <taxon>Metazoa</taxon>
        <taxon>Ecdysozoa</taxon>
        <taxon>Nematoda</taxon>
        <taxon>Chromadorea</taxon>
        <taxon>Rhabditida</taxon>
        <taxon>Rhabditina</taxon>
        <taxon>Rhabditomorpha</taxon>
        <taxon>Rhabditoidea</taxon>
        <taxon>Rhabditidae</taxon>
        <taxon>Peloderinae</taxon>
        <taxon>Caenorhabditis</taxon>
    </lineage>
</organism>
<protein>
    <recommendedName>
        <fullName>Ribosomal RNA-processing protein 8</fullName>
        <ecNumber>2.1.1.-</ecNumber>
    </recommendedName>
</protein>
<dbReference type="EC" id="2.1.1.-"/>
<dbReference type="EMBL" id="FO081716">
    <property type="protein sequence ID" value="CCD73979.1"/>
    <property type="molecule type" value="Genomic_DNA"/>
</dbReference>
<dbReference type="PIR" id="T32579">
    <property type="entry name" value="T32579"/>
</dbReference>
<dbReference type="SMR" id="O44410"/>
<dbReference type="BioGRID" id="42025">
    <property type="interactions" value="2"/>
</dbReference>
<dbReference type="FunCoup" id="O44410">
    <property type="interactions" value="1472"/>
</dbReference>
<dbReference type="STRING" id="6239.T07A9.8.1"/>
<dbReference type="PaxDb" id="6239-T07A9.8"/>
<dbReference type="PeptideAtlas" id="O44410"/>
<dbReference type="EnsemblMetazoa" id="T07A9.8.1">
    <property type="protein sequence ID" value="T07A9.8.1"/>
    <property type="gene ID" value="WBGene00020296"/>
</dbReference>
<dbReference type="KEGG" id="cel:CELE_T07A9.8"/>
<dbReference type="UCSC" id="T07A9.8">
    <property type="organism name" value="c. elegans"/>
</dbReference>
<dbReference type="AGR" id="WB:WBGene00020296"/>
<dbReference type="CTD" id="176864"/>
<dbReference type="WormBase" id="T07A9.8">
    <property type="protein sequence ID" value="CE17217"/>
    <property type="gene ID" value="WBGene00020296"/>
    <property type="gene designation" value="rrp-8"/>
</dbReference>
<dbReference type="eggNOG" id="KOG3045">
    <property type="taxonomic scope" value="Eukaryota"/>
</dbReference>
<dbReference type="GeneTree" id="ENSGT00390000006189"/>
<dbReference type="HOGENOM" id="CLU_027694_2_1_1"/>
<dbReference type="InParanoid" id="O44410"/>
<dbReference type="OMA" id="KWPTNPL"/>
<dbReference type="OrthoDB" id="10258825at2759"/>
<dbReference type="PhylomeDB" id="O44410"/>
<dbReference type="PRO" id="PR:O44410"/>
<dbReference type="Proteomes" id="UP000001940">
    <property type="component" value="Chromosome IV"/>
</dbReference>
<dbReference type="Bgee" id="WBGene00020296">
    <property type="expression patterns" value="Expressed in germ line (C elegans) and 4 other cell types or tissues"/>
</dbReference>
<dbReference type="GO" id="GO:0005677">
    <property type="term" value="C:chromatin silencing complex"/>
    <property type="evidence" value="ECO:0000250"/>
    <property type="project" value="UniProtKB"/>
</dbReference>
<dbReference type="GO" id="GO:0005730">
    <property type="term" value="C:nucleolus"/>
    <property type="evidence" value="ECO:0000250"/>
    <property type="project" value="UniProtKB"/>
</dbReference>
<dbReference type="GO" id="GO:0033553">
    <property type="term" value="C:rDNA heterochromatin"/>
    <property type="evidence" value="ECO:0000250"/>
    <property type="project" value="UniProtKB"/>
</dbReference>
<dbReference type="GO" id="GO:0035064">
    <property type="term" value="F:methylated histone binding"/>
    <property type="evidence" value="ECO:0000250"/>
    <property type="project" value="UniProtKB"/>
</dbReference>
<dbReference type="GO" id="GO:0008168">
    <property type="term" value="F:methyltransferase activity"/>
    <property type="evidence" value="ECO:0007669"/>
    <property type="project" value="UniProtKB-KW"/>
</dbReference>
<dbReference type="GO" id="GO:0042149">
    <property type="term" value="P:cellular response to glucose starvation"/>
    <property type="evidence" value="ECO:0000318"/>
    <property type="project" value="GO_Central"/>
</dbReference>
<dbReference type="GO" id="GO:0032259">
    <property type="term" value="P:methylation"/>
    <property type="evidence" value="ECO:0007669"/>
    <property type="project" value="UniProtKB-KW"/>
</dbReference>
<dbReference type="GO" id="GO:0000183">
    <property type="term" value="P:rDNA heterochromatin formation"/>
    <property type="evidence" value="ECO:0000250"/>
    <property type="project" value="UniProtKB"/>
</dbReference>
<dbReference type="GO" id="GO:0046015">
    <property type="term" value="P:regulation of transcription by glucose"/>
    <property type="evidence" value="ECO:0000318"/>
    <property type="project" value="GO_Central"/>
</dbReference>
<dbReference type="GO" id="GO:0006364">
    <property type="term" value="P:rRNA processing"/>
    <property type="evidence" value="ECO:0007669"/>
    <property type="project" value="UniProtKB-KW"/>
</dbReference>
<dbReference type="CDD" id="cd02440">
    <property type="entry name" value="AdoMet_MTases"/>
    <property type="match status" value="1"/>
</dbReference>
<dbReference type="FunFam" id="1.10.10.2150:FF:000001">
    <property type="entry name" value="Ribosomal RNA-processing protein 8"/>
    <property type="match status" value="1"/>
</dbReference>
<dbReference type="FunFam" id="3.40.50.150:FF:000068">
    <property type="entry name" value="Ribosomal RNA-processing protein 8"/>
    <property type="match status" value="1"/>
</dbReference>
<dbReference type="Gene3D" id="1.10.10.2150">
    <property type="entry name" value="Ribosomal RNA-processing protein 8, N-terminal domain"/>
    <property type="match status" value="1"/>
</dbReference>
<dbReference type="Gene3D" id="3.40.50.150">
    <property type="entry name" value="Vaccinia Virus protein VP39"/>
    <property type="match status" value="1"/>
</dbReference>
<dbReference type="InterPro" id="IPR007823">
    <property type="entry name" value="RRP8"/>
</dbReference>
<dbReference type="InterPro" id="IPR042036">
    <property type="entry name" value="RRP8_N"/>
</dbReference>
<dbReference type="InterPro" id="IPR029063">
    <property type="entry name" value="SAM-dependent_MTases_sf"/>
</dbReference>
<dbReference type="PANTHER" id="PTHR12787">
    <property type="entry name" value="RIBOSOMAL RNA-PROCESSING PROTEIN 8"/>
    <property type="match status" value="1"/>
</dbReference>
<dbReference type="PANTHER" id="PTHR12787:SF0">
    <property type="entry name" value="RIBOSOMAL RNA-PROCESSING PROTEIN 8"/>
    <property type="match status" value="1"/>
</dbReference>
<dbReference type="Pfam" id="PF05148">
    <property type="entry name" value="Methyltransf_8"/>
    <property type="match status" value="1"/>
</dbReference>
<dbReference type="SUPFAM" id="SSF53335">
    <property type="entry name" value="S-adenosyl-L-methionine-dependent methyltransferases"/>
    <property type="match status" value="1"/>
</dbReference>
<proteinExistence type="inferred from homology"/>
<comment type="function">
    <text evidence="1 3 4">Probable methyltransferase required to silence rDNA (By similarity). Involved in regulation of antisense ribosomal siRNA production (PubMed:30224484, PubMed:34365510). Required for the N1-methyladenosine modification of 26S rRNAs (PubMed:30224484).</text>
</comment>
<comment type="subcellular location">
    <subcellularLocation>
        <location evidence="3 4">Nucleus</location>
        <location evidence="3 4">Nucleolus</location>
    </subcellularLocation>
</comment>
<comment type="similarity">
    <text evidence="5">Belongs to the methyltransferase superfamily. RRP8 family.</text>
</comment>